<name>NTPPB_BURMA</name>
<dbReference type="EC" id="3.6.1.-" evidence="1"/>
<dbReference type="EMBL" id="CP000010">
    <property type="protein sequence ID" value="AAU49393.1"/>
    <property type="molecule type" value="Genomic_DNA"/>
</dbReference>
<dbReference type="RefSeq" id="WP_004192535.1">
    <property type="nucleotide sequence ID" value="NC_006348.1"/>
</dbReference>
<dbReference type="RefSeq" id="YP_102322.1">
    <property type="nucleotide sequence ID" value="NC_006348.1"/>
</dbReference>
<dbReference type="SMR" id="Q62LU6"/>
<dbReference type="KEGG" id="bma:BMA0526"/>
<dbReference type="PATRIC" id="fig|243160.12.peg.540"/>
<dbReference type="eggNOG" id="COG0424">
    <property type="taxonomic scope" value="Bacteria"/>
</dbReference>
<dbReference type="HOGENOM" id="CLU_040416_1_0_4"/>
<dbReference type="Proteomes" id="UP000006693">
    <property type="component" value="Chromosome 1"/>
</dbReference>
<dbReference type="GO" id="GO:0005737">
    <property type="term" value="C:cytoplasm"/>
    <property type="evidence" value="ECO:0007669"/>
    <property type="project" value="UniProtKB-SubCell"/>
</dbReference>
<dbReference type="GO" id="GO:0047429">
    <property type="term" value="F:nucleoside triphosphate diphosphatase activity"/>
    <property type="evidence" value="ECO:0007669"/>
    <property type="project" value="InterPro"/>
</dbReference>
<dbReference type="GO" id="GO:0009117">
    <property type="term" value="P:nucleotide metabolic process"/>
    <property type="evidence" value="ECO:0007669"/>
    <property type="project" value="UniProtKB-KW"/>
</dbReference>
<dbReference type="CDD" id="cd00555">
    <property type="entry name" value="Maf"/>
    <property type="match status" value="1"/>
</dbReference>
<dbReference type="Gene3D" id="3.90.950.10">
    <property type="match status" value="1"/>
</dbReference>
<dbReference type="HAMAP" id="MF_00528">
    <property type="entry name" value="Maf"/>
    <property type="match status" value="1"/>
</dbReference>
<dbReference type="InterPro" id="IPR029001">
    <property type="entry name" value="ITPase-like_fam"/>
</dbReference>
<dbReference type="InterPro" id="IPR003697">
    <property type="entry name" value="Maf-like"/>
</dbReference>
<dbReference type="NCBIfam" id="TIGR00172">
    <property type="entry name" value="maf"/>
    <property type="match status" value="1"/>
</dbReference>
<dbReference type="PANTHER" id="PTHR43213">
    <property type="entry name" value="BIFUNCTIONAL DTTP/UTP PYROPHOSPHATASE/METHYLTRANSFERASE PROTEIN-RELATED"/>
    <property type="match status" value="1"/>
</dbReference>
<dbReference type="PANTHER" id="PTHR43213:SF5">
    <property type="entry name" value="BIFUNCTIONAL DTTP_UTP PYROPHOSPHATASE_METHYLTRANSFERASE PROTEIN-RELATED"/>
    <property type="match status" value="1"/>
</dbReference>
<dbReference type="Pfam" id="PF02545">
    <property type="entry name" value="Maf"/>
    <property type="match status" value="1"/>
</dbReference>
<dbReference type="PIRSF" id="PIRSF006305">
    <property type="entry name" value="Maf"/>
    <property type="match status" value="1"/>
</dbReference>
<dbReference type="SUPFAM" id="SSF52972">
    <property type="entry name" value="ITPase-like"/>
    <property type="match status" value="1"/>
</dbReference>
<reference key="1">
    <citation type="journal article" date="2004" name="Proc. Natl. Acad. Sci. U.S.A.">
        <title>Structural flexibility in the Burkholderia mallei genome.</title>
        <authorList>
            <person name="Nierman W.C."/>
            <person name="DeShazer D."/>
            <person name="Kim H.S."/>
            <person name="Tettelin H."/>
            <person name="Nelson K.E."/>
            <person name="Feldblyum T.V."/>
            <person name="Ulrich R.L."/>
            <person name="Ronning C.M."/>
            <person name="Brinkac L.M."/>
            <person name="Daugherty S.C."/>
            <person name="Davidsen T.D."/>
            <person name="DeBoy R.T."/>
            <person name="Dimitrov G."/>
            <person name="Dodson R.J."/>
            <person name="Durkin A.S."/>
            <person name="Gwinn M.L."/>
            <person name="Haft D.H."/>
            <person name="Khouri H.M."/>
            <person name="Kolonay J.F."/>
            <person name="Madupu R."/>
            <person name="Mohammoud Y."/>
            <person name="Nelson W.C."/>
            <person name="Radune D."/>
            <person name="Romero C.M."/>
            <person name="Sarria S."/>
            <person name="Selengut J."/>
            <person name="Shamblin C."/>
            <person name="Sullivan S.A."/>
            <person name="White O."/>
            <person name="Yu Y."/>
            <person name="Zafar N."/>
            <person name="Zhou L."/>
            <person name="Fraser C.M."/>
        </authorList>
    </citation>
    <scope>NUCLEOTIDE SEQUENCE [LARGE SCALE GENOMIC DNA]</scope>
    <source>
        <strain>ATCC 23344</strain>
    </source>
</reference>
<sequence>MQHHACSPPRLILASSSRYRRELLERLRVPFDVVAPEIDETPLPDETPCATALRLAAAKARAAAERARAPHGALVIGSDQVATFDGLQIGKPGTHARALAQLQAMRGRDVEFHSALCLYDSRSGATQSEDIVTRVRFRTLTDVELDAYLRAETPYDVAGSAKSEGLGIALLDAIDSDDPTALVGLPLIALTRMLRAAGYPLFGAPAPAADGVNGR</sequence>
<evidence type="ECO:0000255" key="1">
    <source>
        <dbReference type="HAMAP-Rule" id="MF_00528"/>
    </source>
</evidence>
<proteinExistence type="inferred from homology"/>
<keyword id="KW-0963">Cytoplasm</keyword>
<keyword id="KW-0378">Hydrolase</keyword>
<keyword id="KW-0546">Nucleotide metabolism</keyword>
<keyword id="KW-1185">Reference proteome</keyword>
<accession>Q62LU6</accession>
<protein>
    <recommendedName>
        <fullName evidence="1">7-methyl-GTP pyrophosphatase</fullName>
        <shortName evidence="1">m(7)GTP pyrophosphatase</shortName>
        <ecNumber evidence="1">3.6.1.-</ecNumber>
    </recommendedName>
</protein>
<organism>
    <name type="scientific">Burkholderia mallei (strain ATCC 23344)</name>
    <dbReference type="NCBI Taxonomy" id="243160"/>
    <lineage>
        <taxon>Bacteria</taxon>
        <taxon>Pseudomonadati</taxon>
        <taxon>Pseudomonadota</taxon>
        <taxon>Betaproteobacteria</taxon>
        <taxon>Burkholderiales</taxon>
        <taxon>Burkholderiaceae</taxon>
        <taxon>Burkholderia</taxon>
        <taxon>pseudomallei group</taxon>
    </lineage>
</organism>
<feature type="chain" id="PRO_0000267265" description="7-methyl-GTP pyrophosphatase">
    <location>
        <begin position="1"/>
        <end position="215"/>
    </location>
</feature>
<feature type="active site" description="Proton acceptor" evidence="1">
    <location>
        <position position="79"/>
    </location>
</feature>
<feature type="site" description="Important for substrate specificity" evidence="1">
    <location>
        <position position="19"/>
    </location>
</feature>
<feature type="site" description="Important for substrate specificity" evidence="1">
    <location>
        <position position="80"/>
    </location>
</feature>
<feature type="site" description="Important for substrate specificity" evidence="1">
    <location>
        <position position="164"/>
    </location>
</feature>
<comment type="function">
    <text evidence="1">Nucleoside triphosphate pyrophosphatase that hydrolyzes 7-methyl-GTP (m(7)GTP). May have a dual role in cell division arrest and in preventing the incorporation of modified nucleotides into cellular nucleic acids.</text>
</comment>
<comment type="catalytic activity">
    <reaction evidence="1">
        <text>N(7)-methyl-GTP + H2O = N(7)-methyl-GMP + diphosphate + H(+)</text>
        <dbReference type="Rhea" id="RHEA:58744"/>
        <dbReference type="ChEBI" id="CHEBI:15377"/>
        <dbReference type="ChEBI" id="CHEBI:15378"/>
        <dbReference type="ChEBI" id="CHEBI:33019"/>
        <dbReference type="ChEBI" id="CHEBI:58285"/>
        <dbReference type="ChEBI" id="CHEBI:87133"/>
    </reaction>
</comment>
<comment type="cofactor">
    <cofactor evidence="1">
        <name>a divalent metal cation</name>
        <dbReference type="ChEBI" id="CHEBI:60240"/>
    </cofactor>
</comment>
<comment type="subcellular location">
    <subcellularLocation>
        <location evidence="1">Cytoplasm</location>
    </subcellularLocation>
</comment>
<comment type="similarity">
    <text evidence="1">Belongs to the Maf family. YceF subfamily.</text>
</comment>
<gene>
    <name type="ordered locus">BMA0526</name>
</gene>